<reference key="1">
    <citation type="submission" date="2008-01" db="EMBL/GenBank/DDBJ databases">
        <title>Complete sequence of Pseudomonas putida GB-1.</title>
        <authorList>
            <consortium name="US DOE Joint Genome Institute"/>
            <person name="Copeland A."/>
            <person name="Lucas S."/>
            <person name="Lapidus A."/>
            <person name="Barry K."/>
            <person name="Glavina del Rio T."/>
            <person name="Dalin E."/>
            <person name="Tice H."/>
            <person name="Pitluck S."/>
            <person name="Bruce D."/>
            <person name="Goodwin L."/>
            <person name="Chertkov O."/>
            <person name="Brettin T."/>
            <person name="Detter J.C."/>
            <person name="Han C."/>
            <person name="Kuske C.R."/>
            <person name="Schmutz J."/>
            <person name="Larimer F."/>
            <person name="Land M."/>
            <person name="Hauser L."/>
            <person name="Kyrpides N."/>
            <person name="Kim E."/>
            <person name="McCarthy J.K."/>
            <person name="Richardson P."/>
        </authorList>
    </citation>
    <scope>NUCLEOTIDE SEQUENCE [LARGE SCALE GENOMIC DNA]</scope>
    <source>
        <strain>GB-1</strain>
    </source>
</reference>
<sequence length="192" mass="20720">MLKKTFAALALGTALLSAGQAMAAEYKIDKEGQHAFVDWKISHLGYSFIHGTFKDFDGNFTWDSAKPEASKISVDLKTASLWSNHAERDKHIASADFLDVKKYPEAKFVSTAVKSTGEKTADVTGDLTMHGVTKPVTFKATFNGEGKDPWGGERAGFNATTTLNLNDFGIKGPGATSQTLDLDISVEGVKQK</sequence>
<gene>
    <name type="ordered locus">PputGB1_5030</name>
</gene>
<evidence type="ECO:0000255" key="1">
    <source>
        <dbReference type="HAMAP-Rule" id="MF_00780"/>
    </source>
</evidence>
<keyword id="KW-0574">Periplasm</keyword>
<keyword id="KW-0732">Signal</keyword>
<name>Y5030_PSEPG</name>
<accession>B0KM05</accession>
<protein>
    <recommendedName>
        <fullName evidence="1">UPF0312 protein PputGB1_5030</fullName>
    </recommendedName>
</protein>
<organism>
    <name type="scientific">Pseudomonas putida (strain GB-1)</name>
    <dbReference type="NCBI Taxonomy" id="76869"/>
    <lineage>
        <taxon>Bacteria</taxon>
        <taxon>Pseudomonadati</taxon>
        <taxon>Pseudomonadota</taxon>
        <taxon>Gammaproteobacteria</taxon>
        <taxon>Pseudomonadales</taxon>
        <taxon>Pseudomonadaceae</taxon>
        <taxon>Pseudomonas</taxon>
    </lineage>
</organism>
<feature type="signal peptide" evidence="1">
    <location>
        <begin position="1"/>
        <end position="23"/>
    </location>
</feature>
<feature type="chain" id="PRO_5000305262" description="UPF0312 protein PputGB1_5030">
    <location>
        <begin position="24"/>
        <end position="192"/>
    </location>
</feature>
<comment type="subcellular location">
    <subcellularLocation>
        <location evidence="1">Periplasm</location>
    </subcellularLocation>
</comment>
<comment type="similarity">
    <text evidence="1">Belongs to the UPF0312 family. Type 1 subfamily.</text>
</comment>
<dbReference type="EMBL" id="CP000926">
    <property type="protein sequence ID" value="ABZ00915.1"/>
    <property type="molecule type" value="Genomic_DNA"/>
</dbReference>
<dbReference type="RefSeq" id="WP_012274540.1">
    <property type="nucleotide sequence ID" value="NC_010322.1"/>
</dbReference>
<dbReference type="SMR" id="B0KM05"/>
<dbReference type="KEGG" id="ppg:PputGB1_5030"/>
<dbReference type="eggNOG" id="COG2353">
    <property type="taxonomic scope" value="Bacteria"/>
</dbReference>
<dbReference type="HOGENOM" id="CLU_071003_1_2_6"/>
<dbReference type="Proteomes" id="UP000002157">
    <property type="component" value="Chromosome"/>
</dbReference>
<dbReference type="GO" id="GO:0042597">
    <property type="term" value="C:periplasmic space"/>
    <property type="evidence" value="ECO:0007669"/>
    <property type="project" value="UniProtKB-SubCell"/>
</dbReference>
<dbReference type="Gene3D" id="2.40.128.110">
    <property type="entry name" value="Lipid/polyisoprenoid-binding, YceI-like"/>
    <property type="match status" value="1"/>
</dbReference>
<dbReference type="HAMAP" id="MF_00780">
    <property type="entry name" value="UPF0312"/>
    <property type="match status" value="1"/>
</dbReference>
<dbReference type="InterPro" id="IPR007372">
    <property type="entry name" value="Lipid/polyisoprenoid-bd_YceI"/>
</dbReference>
<dbReference type="InterPro" id="IPR036761">
    <property type="entry name" value="TTHA0802/YceI-like_sf"/>
</dbReference>
<dbReference type="InterPro" id="IPR023480">
    <property type="entry name" value="UPF0312/YceI"/>
</dbReference>
<dbReference type="NCBIfam" id="NF002994">
    <property type="entry name" value="PRK03757.1"/>
    <property type="match status" value="1"/>
</dbReference>
<dbReference type="PANTHER" id="PTHR34406">
    <property type="entry name" value="PROTEIN YCEI"/>
    <property type="match status" value="1"/>
</dbReference>
<dbReference type="PANTHER" id="PTHR34406:SF1">
    <property type="entry name" value="PROTEIN YCEI"/>
    <property type="match status" value="1"/>
</dbReference>
<dbReference type="Pfam" id="PF04264">
    <property type="entry name" value="YceI"/>
    <property type="match status" value="1"/>
</dbReference>
<dbReference type="SMART" id="SM00867">
    <property type="entry name" value="YceI"/>
    <property type="match status" value="1"/>
</dbReference>
<dbReference type="SUPFAM" id="SSF101874">
    <property type="entry name" value="YceI-like"/>
    <property type="match status" value="1"/>
</dbReference>
<proteinExistence type="inferred from homology"/>